<feature type="chain" id="PRO_0000223524" description="Insulin receptor substrate 1-A" evidence="8">
    <location>
        <begin position="1"/>
        <end position="885"/>
    </location>
</feature>
<feature type="domain" description="IRS-type PTB" evidence="5">
    <location>
        <begin position="1"/>
        <end position="56"/>
    </location>
</feature>
<feature type="region of interest" description="Disordered" evidence="6">
    <location>
        <begin position="56"/>
        <end position="225"/>
    </location>
</feature>
<feature type="region of interest" description="Disordered" evidence="6">
    <location>
        <begin position="263"/>
        <end position="282"/>
    </location>
</feature>
<feature type="region of interest" description="Disordered" evidence="6">
    <location>
        <begin position="293"/>
        <end position="313"/>
    </location>
</feature>
<feature type="region of interest" description="Disordered" evidence="6">
    <location>
        <begin position="501"/>
        <end position="581"/>
    </location>
</feature>
<feature type="region of interest" description="GRB2-binding" evidence="3">
    <location>
        <begin position="582"/>
        <end position="584"/>
    </location>
</feature>
<feature type="region of interest" description="Disordered" evidence="6">
    <location>
        <begin position="637"/>
        <end position="665"/>
    </location>
</feature>
<feature type="region of interest" description="Disordered" evidence="6">
    <location>
        <begin position="732"/>
        <end position="803"/>
    </location>
</feature>
<feature type="short sequence motif" description="YXXM motif 1" evidence="4">
    <location>
        <begin position="257"/>
        <end position="260"/>
    </location>
</feature>
<feature type="short sequence motif" description="YXXM motif 2" evidence="4">
    <location>
        <begin position="318"/>
        <end position="321"/>
    </location>
</feature>
<feature type="short sequence motif" description="YXXM motif 3" evidence="4">
    <location>
        <begin position="364"/>
        <end position="367"/>
    </location>
</feature>
<feature type="short sequence motif" description="YXXM motif 4" evidence="4">
    <location>
        <begin position="381"/>
        <end position="384"/>
    </location>
</feature>
<feature type="short sequence motif" description="YXXM motif 5" evidence="4">
    <location>
        <begin position="409"/>
        <end position="412"/>
    </location>
</feature>
<feature type="short sequence motif" description="YXXM motif 6" evidence="4">
    <location>
        <begin position="451"/>
        <end position="454"/>
    </location>
</feature>
<feature type="short sequence motif" description="YXXM motif 7" evidence="4">
    <location>
        <begin position="620"/>
        <end position="623"/>
    </location>
</feature>
<feature type="short sequence motif" description="YXXM motif 8" evidence="4">
    <location>
        <begin position="672"/>
        <end position="675"/>
    </location>
</feature>
<feature type="short sequence motif" description="YXXM motif 9" evidence="4">
    <location>
        <begin position="706"/>
        <end position="709"/>
    </location>
</feature>
<feature type="compositionally biased region" description="Low complexity" evidence="6">
    <location>
        <begin position="61"/>
        <end position="75"/>
    </location>
</feature>
<feature type="compositionally biased region" description="Low complexity" evidence="6">
    <location>
        <begin position="99"/>
        <end position="109"/>
    </location>
</feature>
<feature type="compositionally biased region" description="Low complexity" evidence="6">
    <location>
        <begin position="176"/>
        <end position="197"/>
    </location>
</feature>
<feature type="compositionally biased region" description="Low complexity" evidence="6">
    <location>
        <begin position="205"/>
        <end position="217"/>
    </location>
</feature>
<feature type="compositionally biased region" description="Polar residues" evidence="6">
    <location>
        <begin position="263"/>
        <end position="276"/>
    </location>
</feature>
<feature type="compositionally biased region" description="Polar residues" evidence="6">
    <location>
        <begin position="296"/>
        <end position="313"/>
    </location>
</feature>
<feature type="compositionally biased region" description="Polar residues" evidence="6">
    <location>
        <begin position="504"/>
        <end position="515"/>
    </location>
</feature>
<feature type="compositionally biased region" description="Low complexity" evidence="6">
    <location>
        <begin position="516"/>
        <end position="526"/>
    </location>
</feature>
<feature type="compositionally biased region" description="Polar residues" evidence="6">
    <location>
        <begin position="637"/>
        <end position="660"/>
    </location>
</feature>
<feature type="compositionally biased region" description="Polar residues" evidence="6">
    <location>
        <begin position="743"/>
        <end position="758"/>
    </location>
</feature>
<feature type="compositionally biased region" description="Polar residues" evidence="6">
    <location>
        <begin position="777"/>
        <end position="792"/>
    </location>
</feature>
<feature type="modified residue" description="Phosphoserine" evidence="3">
    <location>
        <position position="104"/>
    </location>
</feature>
<feature type="modified residue" description="Phosphotyrosine; by INSR" evidence="1">
    <location>
        <position position="257"/>
    </location>
</feature>
<feature type="modified residue" description="Phosphotyrosine; by INSR" evidence="1">
    <location>
        <position position="364"/>
    </location>
</feature>
<feature type="modified residue" description="Phosphotyrosine; by INSR" evidence="1">
    <location>
        <position position="381"/>
    </location>
</feature>
<feature type="modified residue" description="Phosphotyrosine" evidence="2">
    <location>
        <position position="409"/>
    </location>
</feature>
<feature type="modified residue" description="Phosphotyrosine; by INSR" evidence="1">
    <location>
        <position position="582"/>
    </location>
</feature>
<feature type="modified residue" description="Phosphotyrosine; by INSR" evidence="1">
    <location>
        <position position="620"/>
    </location>
</feature>
<feature type="modified residue" description="Phosphotyrosine; by INSR" evidence="1">
    <location>
        <position position="672"/>
    </location>
</feature>
<feature type="modified residue" description="Phosphotyrosine; by INSR" evidence="1">
    <location>
        <position position="834"/>
    </location>
</feature>
<feature type="modified residue" description="Phosphotyrosine; by INSR" evidence="1">
    <location>
        <position position="866"/>
    </location>
</feature>
<protein>
    <recommendedName>
        <fullName>Insulin receptor substrate 1-A</fullName>
        <shortName>IRS1-A</shortName>
        <shortName>xIRS-1-A</shortName>
    </recommendedName>
    <alternativeName>
        <fullName>XIRS-L</fullName>
    </alternativeName>
</protein>
<name>IRS1A_XENLA</name>
<sequence>MNIRRCGHSENFFFIEVGRSAVTGAGEFWMQVDDSVVAQNMHETILEAMKALSDEFRPRSKSQSSSNCSNPISVPLRRHHLNHPPPSQVGLNRRARTESATATSPAGGAAKHGSSSFRVRASSDGEGTMSRPASMEGSPVSPSASRTQSHRHRGSSRLHPPLNHSRSIPMPATRCSPSATSPVSLSSSSTSGHGSTSDCMCPRRSSASISGSPSDGGFISSDEYGSSPCDFRSSFRSVTPDSMGHTPPAREEELNNYICMGKSSSHLQRGPQQRYQPSRGEELTDFDKVFRKRTHSSGTSPPTVSHQKTPSQSSIEEYTEMMPTHPVRLTSFRHSAFVPTYSYPEECLDLHLEGSRANHKDDGYMPMSPGVAPVSTKTNDYMPMSPKSVSAPQQIINPRWHSAVDSNGYMMMSPSGSCSPDNTNYSKIWTNGTNPKLSIDSIEGKLPCSDYINMSPASGSTTSTPPDSYLNSVEESTKPVYSYFSLPRSFKHVHRKSEDGNLRISANSGHNLYTEDSSSSSTSSDSLGGQDPQQPRKGEGCIQGKRLTRPTRLSLENSSKASTLPRVREPALPPEPKSPGEYVNIEFNDKVFSGGLVPSMCSLPFVQSRVVPQRENLSEYMNMDLGVWRAKTSYASTSSYEPPNKPVNSVCPTETCSSSRPPIRGKPISRDYMSMQLGSLCPDYSQVPPTRLSAKSITLSSSKSNYAEMSSGRVSDNIPAIAPASNSSLSEASRSSLLGQGSGPSAFTRVSLSPNRNPSAKVIRAGDPQGRRRHSSETFSSTPTTARVTTGPVSGEDVKRHSSASFENVWLRPGEIARRDSLQPSDHTHNGLNYIDLDLAKDLSSLDHCNSHQSGVSHPSDDLSPYASITFHKLEEHRSQAETEE</sequence>
<accession>Q91615</accession>
<proteinExistence type="evidence at protein level"/>
<keyword id="KW-0597">Phosphoprotein</keyword>
<keyword id="KW-1185">Reference proteome</keyword>
<keyword id="KW-0677">Repeat</keyword>
<keyword id="KW-0807">Transducer</keyword>
<evidence type="ECO:0000250" key="1"/>
<evidence type="ECO:0000250" key="2">
    <source>
        <dbReference type="UniProtKB" id="P35568"/>
    </source>
</evidence>
<evidence type="ECO:0000250" key="3">
    <source>
        <dbReference type="UniProtKB" id="P35570"/>
    </source>
</evidence>
<evidence type="ECO:0000255" key="4"/>
<evidence type="ECO:0000255" key="5">
    <source>
        <dbReference type="PROSITE-ProRule" id="PRU00389"/>
    </source>
</evidence>
<evidence type="ECO:0000256" key="6">
    <source>
        <dbReference type="SAM" id="MobiDB-lite"/>
    </source>
</evidence>
<evidence type="ECO:0000269" key="7">
    <source>
    </source>
</evidence>
<evidence type="ECO:0000305" key="8"/>
<evidence type="ECO:0000312" key="9">
    <source>
        <dbReference type="EMBL" id="AAA73572.1"/>
    </source>
</evidence>
<reference evidence="8 9" key="1">
    <citation type="journal article" date="1995" name="Mol. Cell. Biol.">
        <title>Molecular cloning of an amphibian insulin receptor substrate 1-like cDNA and involvement of phosphatidylinositol 3-kinase in insulin-induced Xenopus oocyte maturation.</title>
        <authorList>
            <person name="Liu X.J."/>
            <person name="Sorisky A."/>
            <person name="Zhu L."/>
            <person name="Pawson T."/>
        </authorList>
    </citation>
    <scope>NUCLEOTIDE SEQUENCE [MRNA]</scope>
    <scope>DEVELOPMENTAL STAGE</scope>
    <scope>PHOSPHORYLATION</scope>
    <scope>INTERACTION WITH PIK3R1</scope>
    <source>
        <tissue evidence="7">Ovary</tissue>
    </source>
</reference>
<dbReference type="EMBL" id="U27842">
    <property type="protein sequence ID" value="AAA73572.1"/>
    <property type="molecule type" value="mRNA"/>
</dbReference>
<dbReference type="RefSeq" id="NP_001084092.1">
    <property type="nucleotide sequence ID" value="NM_001090623.1"/>
</dbReference>
<dbReference type="SMR" id="Q91615"/>
<dbReference type="GeneID" id="399299"/>
<dbReference type="KEGG" id="xla:399299"/>
<dbReference type="AGR" id="Xenbase:XB-GENE-478676"/>
<dbReference type="CTD" id="399299"/>
<dbReference type="Xenbase" id="XB-GENE-478676">
    <property type="gene designation" value="irs1.L"/>
</dbReference>
<dbReference type="OrthoDB" id="946068at2759"/>
<dbReference type="Proteomes" id="UP000186698">
    <property type="component" value="Chromosome 5L"/>
</dbReference>
<dbReference type="Bgee" id="399299">
    <property type="expression patterns" value="Expressed in muscle tissue and 19 other cell types or tissues"/>
</dbReference>
<dbReference type="GO" id="GO:0005737">
    <property type="term" value="C:cytoplasm"/>
    <property type="evidence" value="ECO:0000250"/>
    <property type="project" value="UniProtKB"/>
</dbReference>
<dbReference type="GO" id="GO:0005829">
    <property type="term" value="C:cytosol"/>
    <property type="evidence" value="ECO:0000318"/>
    <property type="project" value="GO_Central"/>
</dbReference>
<dbReference type="GO" id="GO:0043231">
    <property type="term" value="C:intracellular membrane-bounded organelle"/>
    <property type="evidence" value="ECO:0000250"/>
    <property type="project" value="UniProtKB"/>
</dbReference>
<dbReference type="GO" id="GO:0005634">
    <property type="term" value="C:nucleus"/>
    <property type="evidence" value="ECO:0000250"/>
    <property type="project" value="UniProtKB"/>
</dbReference>
<dbReference type="GO" id="GO:0005886">
    <property type="term" value="C:plasma membrane"/>
    <property type="evidence" value="ECO:0000318"/>
    <property type="project" value="GO_Central"/>
</dbReference>
<dbReference type="GO" id="GO:0005158">
    <property type="term" value="F:insulin receptor binding"/>
    <property type="evidence" value="ECO:0000250"/>
    <property type="project" value="UniProtKB"/>
</dbReference>
<dbReference type="GO" id="GO:0005159">
    <property type="term" value="F:insulin-like growth factor receptor binding"/>
    <property type="evidence" value="ECO:0000250"/>
    <property type="project" value="UniProtKB"/>
</dbReference>
<dbReference type="GO" id="GO:0043548">
    <property type="term" value="F:phosphatidylinositol 3-kinase binding"/>
    <property type="evidence" value="ECO:0000314"/>
    <property type="project" value="UniProtKB"/>
</dbReference>
<dbReference type="GO" id="GO:0042169">
    <property type="term" value="F:SH2 domain binding"/>
    <property type="evidence" value="ECO:0000250"/>
    <property type="project" value="UniProtKB"/>
</dbReference>
<dbReference type="GO" id="GO:0008286">
    <property type="term" value="P:insulin receptor signaling pathway"/>
    <property type="evidence" value="ECO:0000318"/>
    <property type="project" value="GO_Central"/>
</dbReference>
<dbReference type="GO" id="GO:0048009">
    <property type="term" value="P:insulin-like growth factor receptor signaling pathway"/>
    <property type="evidence" value="ECO:0000250"/>
    <property type="project" value="UniProtKB"/>
</dbReference>
<dbReference type="Gene3D" id="2.30.29.30">
    <property type="entry name" value="Pleckstrin-homology domain (PH domain)/Phosphotyrosine-binding domain (PTB)"/>
    <property type="match status" value="1"/>
</dbReference>
<dbReference type="InterPro" id="IPR039011">
    <property type="entry name" value="IRS"/>
</dbReference>
<dbReference type="InterPro" id="IPR002404">
    <property type="entry name" value="IRS_PTB"/>
</dbReference>
<dbReference type="InterPro" id="IPR011993">
    <property type="entry name" value="PH-like_dom_sf"/>
</dbReference>
<dbReference type="PANTHER" id="PTHR10614">
    <property type="entry name" value="INSULIN RECEPTOR SUBSTRATE"/>
    <property type="match status" value="1"/>
</dbReference>
<dbReference type="PANTHER" id="PTHR10614:SF11">
    <property type="entry name" value="INSULIN RECEPTOR SUBSTRATE 1"/>
    <property type="match status" value="1"/>
</dbReference>
<dbReference type="Pfam" id="PF02174">
    <property type="entry name" value="IRS"/>
    <property type="match status" value="1"/>
</dbReference>
<dbReference type="PRINTS" id="PR00628">
    <property type="entry name" value="INSULINRSI"/>
</dbReference>
<dbReference type="SMART" id="SM01244">
    <property type="entry name" value="IRS"/>
    <property type="match status" value="1"/>
</dbReference>
<dbReference type="SMART" id="SM00310">
    <property type="entry name" value="PTBI"/>
    <property type="match status" value="1"/>
</dbReference>
<dbReference type="SUPFAM" id="SSF50729">
    <property type="entry name" value="PH domain-like"/>
    <property type="match status" value="1"/>
</dbReference>
<dbReference type="PROSITE" id="PS51064">
    <property type="entry name" value="IRS_PTB"/>
    <property type="match status" value="1"/>
</dbReference>
<comment type="function">
    <text evidence="1">May mediate the control of various cellular processes by insulin. When phosphorylated by the insulin receptor binds specifically to various cellular proteins containing SH2 domains such as phosphatidylinositol 3-kinase p85 subunit or grb2. Activates phosphatidylinositol 3-kinase when bound to the regulatory p85 subunit (By similarity).</text>
</comment>
<comment type="subunit">
    <text evidence="2 7">Interacts with the NPXY motif of tyrosine-phosphorylated igf1r and insr via the PTB domain (By similarity). Binds to phosphatidylinositol 3-kinase p85 subunit at a low level in vitro prior to phosphorylation. Binding is greatly enhanced following tyrosine phosphorylation by insr and probably occurs via the phosphorylated YXXM motifs.</text>
</comment>
<comment type="developmental stage">
    <text evidence="7">Expressed in stage VI primed oocytes (at protein level).</text>
</comment>
<comment type="PTM">
    <text evidence="1">Phosphorylation of Tyr-582 is required for grb2-binding.</text>
</comment>
<gene>
    <name type="primary">irs1-a</name>
</gene>
<organism>
    <name type="scientific">Xenopus laevis</name>
    <name type="common">African clawed frog</name>
    <dbReference type="NCBI Taxonomy" id="8355"/>
    <lineage>
        <taxon>Eukaryota</taxon>
        <taxon>Metazoa</taxon>
        <taxon>Chordata</taxon>
        <taxon>Craniata</taxon>
        <taxon>Vertebrata</taxon>
        <taxon>Euteleostomi</taxon>
        <taxon>Amphibia</taxon>
        <taxon>Batrachia</taxon>
        <taxon>Anura</taxon>
        <taxon>Pipoidea</taxon>
        <taxon>Pipidae</taxon>
        <taxon>Xenopodinae</taxon>
        <taxon>Xenopus</taxon>
        <taxon>Xenopus</taxon>
    </lineage>
</organism>